<evidence type="ECO:0000255" key="1"/>
<evidence type="ECO:0000255" key="2">
    <source>
        <dbReference type="PROSITE-ProRule" id="PRU00498"/>
    </source>
</evidence>
<evidence type="ECO:0000303" key="3">
    <source>
    </source>
</evidence>
<evidence type="ECO:0000305" key="4"/>
<evidence type="ECO:0000305" key="5">
    <source>
    </source>
</evidence>
<reference key="1">
    <citation type="journal article" date="2016" name="Genome Announc.">
        <title>Full Genome of Phialocephala scopiformis DAOMC 229536, a Fungal Endophyte of Spruce Producing the Potent Anti-Insectan Compound Rugulosin.</title>
        <authorList>
            <person name="Walker A.K."/>
            <person name="Frasz S.L."/>
            <person name="Seifert K.A."/>
            <person name="Miller J.D."/>
            <person name="Mondo S.J."/>
            <person name="LaButti K."/>
            <person name="Lipzen A."/>
            <person name="Dockter R.B."/>
            <person name="Kennedy M.C."/>
            <person name="Grigoriev I.V."/>
            <person name="Spatafora J.W."/>
        </authorList>
    </citation>
    <scope>NUCLEOTIDE SEQUENCE [LARGE SCALE GENOMIC DNA]</scope>
    <source>
        <strain>DAOMC 229536 / CBS 120377 / 5WS22E1</strain>
    </source>
</reference>
<reference key="2">
    <citation type="journal article" date="2016" name="Genome Announc.">
        <title>Full Genome of Phialocephala scopiformis DAOMC 229536, a Fungal Endophyte of Spruce Producing the Potent Anti-Insectan Compound Rugulosin.</title>
        <authorList>
            <person name="Walker A.K."/>
            <person name="Frasz S.L."/>
            <person name="Seifert K.A."/>
            <person name="Miller J.D."/>
            <person name="Mondo S.J."/>
            <person name="LaButti K."/>
            <person name="Lipzen A."/>
            <person name="Dockter R.B."/>
            <person name="Kennedy M.C."/>
            <person name="Grigoriev I.V."/>
            <person name="Spatafora J.W."/>
        </authorList>
    </citation>
    <scope>ERRATUM OF PUBMED:26950333</scope>
</reference>
<reference key="3">
    <citation type="journal article" date="2021" name="J. Am. Chem. Soc.">
        <title>Biosynthesis of para-cyclophane-containing hirsutellone family of fungal natural products.</title>
        <authorList>
            <person name="Ohashi M."/>
            <person name="Kakule T.B."/>
            <person name="Tang M.C."/>
            <person name="Jamieson C.S."/>
            <person name="Liu M."/>
            <person name="Zhao Y.L."/>
            <person name="Houk K.N."/>
            <person name="Tang Y."/>
        </authorList>
    </citation>
    <scope>IDENTIFICATION</scope>
    <scope>FUNCTION</scope>
</reference>
<gene>
    <name evidence="3" type="primary">scpX</name>
    <name type="ORF">LY89DRAFT_715842</name>
</gene>
<protein>
    <recommendedName>
        <fullName evidence="3">Probable epoxidase scpX</fullName>
        <ecNumber evidence="5">1.14.-.-</ecNumber>
    </recommendedName>
    <alternativeName>
        <fullName evidence="3">Scp cluster protein X</fullName>
    </alternativeName>
</protein>
<name>SCPX_MOLSC</name>
<keyword id="KW-0325">Glycoprotein</keyword>
<keyword id="KW-0472">Membrane</keyword>
<keyword id="KW-0560">Oxidoreductase</keyword>
<keyword id="KW-1185">Reference proteome</keyword>
<keyword id="KW-0732">Signal</keyword>
<keyword id="KW-0812">Transmembrane</keyword>
<keyword id="KW-1133">Transmembrane helix</keyword>
<keyword id="KW-0843">Virulence</keyword>
<dbReference type="EC" id="1.14.-.-" evidence="5"/>
<dbReference type="EMBL" id="KQ947409">
    <property type="protein sequence ID" value="KUJ20438.1"/>
    <property type="molecule type" value="Genomic_DNA"/>
</dbReference>
<dbReference type="RefSeq" id="XP_018074793.1">
    <property type="nucleotide sequence ID" value="XM_018218229.1"/>
</dbReference>
<dbReference type="STRING" id="149040.A0A194XJW1"/>
<dbReference type="GeneID" id="28827955"/>
<dbReference type="KEGG" id="psco:LY89DRAFT_715842"/>
<dbReference type="OrthoDB" id="1523883at2759"/>
<dbReference type="Proteomes" id="UP000070700">
    <property type="component" value="Unassembled WGS sequence"/>
</dbReference>
<dbReference type="GO" id="GO:0016020">
    <property type="term" value="C:membrane"/>
    <property type="evidence" value="ECO:0007669"/>
    <property type="project" value="UniProtKB-SubCell"/>
</dbReference>
<dbReference type="GO" id="GO:0016491">
    <property type="term" value="F:oxidoreductase activity"/>
    <property type="evidence" value="ECO:0007669"/>
    <property type="project" value="UniProtKB-KW"/>
</dbReference>
<sequence>MATLIRLLRLLPVASSSAVLMFALDEHLIFGTWVQPSIRERANANLPAWWTRGGLRWRWVLIIFYPVNYILGILNLFISQDQLQDTGASKWYTLGLLFSIAHMFYLFRALKLIAAIENDEPKGNVTYSMGRWLKMNWTRALLTDLPAWLCFIAAALKAL</sequence>
<accession>A0A194XJW1</accession>
<comment type="function">
    <text evidence="5">Probable epoxidase; part of the gene scp cluster that mediates the biosynthesis of a hirsutellone-like compound that has still to be identified.</text>
</comment>
<comment type="pathway">
    <text evidence="5">Mycotoxin biosynthesis.</text>
</comment>
<comment type="subcellular location">
    <subcellularLocation>
        <location evidence="1">Membrane</location>
        <topology evidence="1">Multi-pass membrane protein</topology>
    </subcellularLocation>
</comment>
<comment type="similarity">
    <text evidence="4">Belongs to the epoxidase xenD family.</text>
</comment>
<feature type="signal peptide" evidence="1">
    <location>
        <begin position="1"/>
        <end position="25"/>
    </location>
</feature>
<feature type="chain" id="PRO_0000458437" description="Probable epoxidase scpX">
    <location>
        <begin position="26"/>
        <end position="159"/>
    </location>
</feature>
<feature type="transmembrane region" description="Helical" evidence="1">
    <location>
        <begin position="59"/>
        <end position="79"/>
    </location>
</feature>
<feature type="transmembrane region" description="Helical" evidence="1">
    <location>
        <begin position="96"/>
        <end position="116"/>
    </location>
</feature>
<feature type="transmembrane region" description="Helical" evidence="1">
    <location>
        <begin position="139"/>
        <end position="159"/>
    </location>
</feature>
<feature type="glycosylation site" description="N-linked (GlcNAc...) asparagine" evidence="2">
    <location>
        <position position="124"/>
    </location>
</feature>
<feature type="glycosylation site" description="N-linked (GlcNAc...) asparagine" evidence="2">
    <location>
        <position position="136"/>
    </location>
</feature>
<proteinExistence type="inferred from homology"/>
<organism>
    <name type="scientific">Mollisia scopiformis</name>
    <name type="common">Conifer needle endophyte fungus</name>
    <name type="synonym">Phialocephala scopiformis</name>
    <dbReference type="NCBI Taxonomy" id="149040"/>
    <lineage>
        <taxon>Eukaryota</taxon>
        <taxon>Fungi</taxon>
        <taxon>Dikarya</taxon>
        <taxon>Ascomycota</taxon>
        <taxon>Pezizomycotina</taxon>
        <taxon>Leotiomycetes</taxon>
        <taxon>Helotiales</taxon>
        <taxon>Mollisiaceae</taxon>
        <taxon>Mollisia</taxon>
    </lineage>
</organism>